<feature type="chain" id="PRO_0000130097" description="Small ribosomal subunit protein uS3">
    <location>
        <begin position="1"/>
        <end position="223"/>
    </location>
</feature>
<feature type="domain" description="KH type-2" evidence="1">
    <location>
        <begin position="39"/>
        <end position="117"/>
    </location>
</feature>
<reference key="1">
    <citation type="journal article" date="2003" name="Nucleic Acids Res.">
        <title>Genome sequence of Chlamydophila caviae (Chlamydia psittaci GPIC): examining the role of niche-specific genes in the evolution of the Chlamydiaceae.</title>
        <authorList>
            <person name="Read T.D."/>
            <person name="Myers G.S.A."/>
            <person name="Brunham R.C."/>
            <person name="Nelson W.C."/>
            <person name="Paulsen I.T."/>
            <person name="Heidelberg J.F."/>
            <person name="Holtzapple E.K."/>
            <person name="Khouri H.M."/>
            <person name="Federova N.B."/>
            <person name="Carty H.A."/>
            <person name="Umayam L.A."/>
            <person name="Haft D.H."/>
            <person name="Peterson J.D."/>
            <person name="Beanan M.J."/>
            <person name="White O."/>
            <person name="Salzberg S.L."/>
            <person name="Hsia R.-C."/>
            <person name="McClarty G."/>
            <person name="Rank R.G."/>
            <person name="Bavoil P.M."/>
            <person name="Fraser C.M."/>
        </authorList>
    </citation>
    <scope>NUCLEOTIDE SEQUENCE [LARGE SCALE GENOMIC DNA]</scope>
    <source>
        <strain>ATCC VR-813 / DSM 19441 / 03DC25 / GPIC</strain>
    </source>
</reference>
<protein>
    <recommendedName>
        <fullName evidence="1">Small ribosomal subunit protein uS3</fullName>
    </recommendedName>
    <alternativeName>
        <fullName evidence="2">30S ribosomal protein S3</fullName>
    </alternativeName>
</protein>
<dbReference type="EMBL" id="AE015925">
    <property type="protein sequence ID" value="AAP04851.1"/>
    <property type="molecule type" value="Genomic_DNA"/>
</dbReference>
<dbReference type="RefSeq" id="WP_011006072.1">
    <property type="nucleotide sequence ID" value="NC_003361.3"/>
</dbReference>
<dbReference type="SMR" id="Q824P5"/>
<dbReference type="STRING" id="227941.CCA_00099"/>
<dbReference type="KEGG" id="cca:CCA_00099"/>
<dbReference type="eggNOG" id="COG0092">
    <property type="taxonomic scope" value="Bacteria"/>
</dbReference>
<dbReference type="HOGENOM" id="CLU_058591_0_2_0"/>
<dbReference type="OrthoDB" id="9806396at2"/>
<dbReference type="Proteomes" id="UP000002193">
    <property type="component" value="Chromosome"/>
</dbReference>
<dbReference type="GO" id="GO:0022627">
    <property type="term" value="C:cytosolic small ribosomal subunit"/>
    <property type="evidence" value="ECO:0007669"/>
    <property type="project" value="TreeGrafter"/>
</dbReference>
<dbReference type="GO" id="GO:0003729">
    <property type="term" value="F:mRNA binding"/>
    <property type="evidence" value="ECO:0007669"/>
    <property type="project" value="UniProtKB-UniRule"/>
</dbReference>
<dbReference type="GO" id="GO:0019843">
    <property type="term" value="F:rRNA binding"/>
    <property type="evidence" value="ECO:0007669"/>
    <property type="project" value="UniProtKB-UniRule"/>
</dbReference>
<dbReference type="GO" id="GO:0003735">
    <property type="term" value="F:structural constituent of ribosome"/>
    <property type="evidence" value="ECO:0007669"/>
    <property type="project" value="InterPro"/>
</dbReference>
<dbReference type="GO" id="GO:0006412">
    <property type="term" value="P:translation"/>
    <property type="evidence" value="ECO:0007669"/>
    <property type="project" value="UniProtKB-UniRule"/>
</dbReference>
<dbReference type="CDD" id="cd02412">
    <property type="entry name" value="KH-II_30S_S3"/>
    <property type="match status" value="1"/>
</dbReference>
<dbReference type="FunFam" id="3.30.300.20:FF:000001">
    <property type="entry name" value="30S ribosomal protein S3"/>
    <property type="match status" value="1"/>
</dbReference>
<dbReference type="Gene3D" id="3.30.300.20">
    <property type="match status" value="1"/>
</dbReference>
<dbReference type="Gene3D" id="3.30.1140.32">
    <property type="entry name" value="Ribosomal protein S3, C-terminal domain"/>
    <property type="match status" value="1"/>
</dbReference>
<dbReference type="HAMAP" id="MF_01309_B">
    <property type="entry name" value="Ribosomal_uS3_B"/>
    <property type="match status" value="1"/>
</dbReference>
<dbReference type="InterPro" id="IPR004087">
    <property type="entry name" value="KH_dom"/>
</dbReference>
<dbReference type="InterPro" id="IPR015946">
    <property type="entry name" value="KH_dom-like_a/b"/>
</dbReference>
<dbReference type="InterPro" id="IPR004044">
    <property type="entry name" value="KH_dom_type_2"/>
</dbReference>
<dbReference type="InterPro" id="IPR009019">
    <property type="entry name" value="KH_sf_prok-type"/>
</dbReference>
<dbReference type="InterPro" id="IPR036419">
    <property type="entry name" value="Ribosomal_S3_C_sf"/>
</dbReference>
<dbReference type="InterPro" id="IPR005704">
    <property type="entry name" value="Ribosomal_uS3_bac-typ"/>
</dbReference>
<dbReference type="InterPro" id="IPR001351">
    <property type="entry name" value="Ribosomal_uS3_C"/>
</dbReference>
<dbReference type="InterPro" id="IPR018280">
    <property type="entry name" value="Ribosomal_uS3_CS"/>
</dbReference>
<dbReference type="NCBIfam" id="TIGR01009">
    <property type="entry name" value="rpsC_bact"/>
    <property type="match status" value="1"/>
</dbReference>
<dbReference type="PANTHER" id="PTHR11760">
    <property type="entry name" value="30S/40S RIBOSOMAL PROTEIN S3"/>
    <property type="match status" value="1"/>
</dbReference>
<dbReference type="PANTHER" id="PTHR11760:SF19">
    <property type="entry name" value="SMALL RIBOSOMAL SUBUNIT PROTEIN US3C"/>
    <property type="match status" value="1"/>
</dbReference>
<dbReference type="Pfam" id="PF07650">
    <property type="entry name" value="KH_2"/>
    <property type="match status" value="1"/>
</dbReference>
<dbReference type="Pfam" id="PF00189">
    <property type="entry name" value="Ribosomal_S3_C"/>
    <property type="match status" value="1"/>
</dbReference>
<dbReference type="SMART" id="SM00322">
    <property type="entry name" value="KH"/>
    <property type="match status" value="1"/>
</dbReference>
<dbReference type="SUPFAM" id="SSF54814">
    <property type="entry name" value="Prokaryotic type KH domain (KH-domain type II)"/>
    <property type="match status" value="1"/>
</dbReference>
<dbReference type="SUPFAM" id="SSF54821">
    <property type="entry name" value="Ribosomal protein S3 C-terminal domain"/>
    <property type="match status" value="1"/>
</dbReference>
<dbReference type="PROSITE" id="PS50823">
    <property type="entry name" value="KH_TYPE_2"/>
    <property type="match status" value="1"/>
</dbReference>
<dbReference type="PROSITE" id="PS00548">
    <property type="entry name" value="RIBOSOMAL_S3"/>
    <property type="match status" value="1"/>
</dbReference>
<evidence type="ECO:0000255" key="1">
    <source>
        <dbReference type="HAMAP-Rule" id="MF_01309"/>
    </source>
</evidence>
<evidence type="ECO:0000305" key="2"/>
<accession>Q824P5</accession>
<name>RS3_CHLCV</name>
<keyword id="KW-0687">Ribonucleoprotein</keyword>
<keyword id="KW-0689">Ribosomal protein</keyword>
<keyword id="KW-0694">RNA-binding</keyword>
<keyword id="KW-0699">rRNA-binding</keyword>
<comment type="function">
    <text evidence="1">Binds the lower part of the 30S subunit head. Binds mRNA in the 70S ribosome, positioning it for translation.</text>
</comment>
<comment type="subunit">
    <text evidence="1">Part of the 30S ribosomal subunit. Forms a tight complex with proteins S10 and S14.</text>
</comment>
<comment type="similarity">
    <text evidence="1">Belongs to the universal ribosomal protein uS3 family.</text>
</comment>
<sequence length="223" mass="24620">MGQKGCPIGFRTAVTKKWRSLWYGNKQEFGKFLIEDVKIREHLRKKPSCQGAAGFIVRRMSGKIEVTIQTARPGLVIGKKGAEVDLLKEELRKLTGKEVWVEIAEIKRPELNAKLVADNIARQIERRVSFRRAMKKAMQSVMDAGAIGVKIQVSGRLAGAEIARSEWYKNGRVPLHTLRADIDYATASAETTYGIIGVKVWINLGEKTSTANANTGATAPAAQ</sequence>
<proteinExistence type="inferred from homology"/>
<gene>
    <name evidence="1" type="primary">rpsC</name>
    <name type="ordered locus">CCA_00099</name>
</gene>
<organism>
    <name type="scientific">Chlamydia caviae (strain ATCC VR-813 / DSM 19441 / 03DC25 / GPIC)</name>
    <name type="common">Chlamydophila caviae</name>
    <dbReference type="NCBI Taxonomy" id="227941"/>
    <lineage>
        <taxon>Bacteria</taxon>
        <taxon>Pseudomonadati</taxon>
        <taxon>Chlamydiota</taxon>
        <taxon>Chlamydiia</taxon>
        <taxon>Chlamydiales</taxon>
        <taxon>Chlamydiaceae</taxon>
        <taxon>Chlamydia/Chlamydophila group</taxon>
        <taxon>Chlamydia</taxon>
    </lineage>
</organism>